<comment type="function">
    <text evidence="1">Endonuclease that is involved in the suppression of homologous recombination and thus may have a key role in the control of bacterial genetic diversity.</text>
</comment>
<comment type="function">
    <text evidence="1">Acts as a ribosome collision sensor, splitting the ribosome into its 2 subunits. Detects stalled/collided 70S ribosomes which it binds and splits by an ATP-hydrolysis driven conformational change. Acts upstream of the ribosome quality control system (RQC), a ribosome-associated complex that mediates the extraction of incompletely synthesized nascent chains from stalled ribosomes and their subsequent degradation. Probably generates substrates for RQC.</text>
</comment>
<comment type="subunit">
    <text evidence="1">Homodimer. Binds to stalled ribosomes, contacting rRNA.</text>
</comment>
<comment type="similarity">
    <text evidence="1">Belongs to the DNA mismatch repair MutS family. MutS2 subfamily.</text>
</comment>
<keyword id="KW-0067">ATP-binding</keyword>
<keyword id="KW-0238">DNA-binding</keyword>
<keyword id="KW-0255">Endonuclease</keyword>
<keyword id="KW-0378">Hydrolase</keyword>
<keyword id="KW-0540">Nuclease</keyword>
<keyword id="KW-0547">Nucleotide-binding</keyword>
<keyword id="KW-0694">RNA-binding</keyword>
<keyword id="KW-0699">rRNA-binding</keyword>
<evidence type="ECO:0000255" key="1">
    <source>
        <dbReference type="HAMAP-Rule" id="MF_00092"/>
    </source>
</evidence>
<name>MUTS2_STAAE</name>
<protein>
    <recommendedName>
        <fullName evidence="1">Endonuclease MutS2</fullName>
        <ecNumber evidence="1">3.1.-.-</ecNumber>
    </recommendedName>
    <alternativeName>
        <fullName evidence="1">Ribosome-associated protein quality control-upstream factor</fullName>
        <shortName evidence="1">RQC-upstream factor</shortName>
        <shortName evidence="1">RqcU</shortName>
        <ecNumber evidence="1">3.6.4.-</ecNumber>
    </alternativeName>
</protein>
<proteinExistence type="inferred from homology"/>
<accession>A6QG46</accession>
<dbReference type="EC" id="3.1.-.-" evidence="1"/>
<dbReference type="EC" id="3.6.4.-" evidence="1"/>
<dbReference type="EMBL" id="AP009351">
    <property type="protein sequence ID" value="BAF67328.1"/>
    <property type="molecule type" value="Genomic_DNA"/>
</dbReference>
<dbReference type="RefSeq" id="WP_001249285.1">
    <property type="nucleotide sequence ID" value="NZ_JBBIAE010000001.1"/>
</dbReference>
<dbReference type="SMR" id="A6QG46"/>
<dbReference type="KEGG" id="sae:NWMN_1056"/>
<dbReference type="HOGENOM" id="CLU_011252_2_1_9"/>
<dbReference type="Proteomes" id="UP000006386">
    <property type="component" value="Chromosome"/>
</dbReference>
<dbReference type="GO" id="GO:0005524">
    <property type="term" value="F:ATP binding"/>
    <property type="evidence" value="ECO:0007669"/>
    <property type="project" value="UniProtKB-UniRule"/>
</dbReference>
<dbReference type="GO" id="GO:0016887">
    <property type="term" value="F:ATP hydrolysis activity"/>
    <property type="evidence" value="ECO:0007669"/>
    <property type="project" value="InterPro"/>
</dbReference>
<dbReference type="GO" id="GO:0140664">
    <property type="term" value="F:ATP-dependent DNA damage sensor activity"/>
    <property type="evidence" value="ECO:0007669"/>
    <property type="project" value="InterPro"/>
</dbReference>
<dbReference type="GO" id="GO:0004519">
    <property type="term" value="F:endonuclease activity"/>
    <property type="evidence" value="ECO:0007669"/>
    <property type="project" value="UniProtKB-UniRule"/>
</dbReference>
<dbReference type="GO" id="GO:0030983">
    <property type="term" value="F:mismatched DNA binding"/>
    <property type="evidence" value="ECO:0007669"/>
    <property type="project" value="InterPro"/>
</dbReference>
<dbReference type="GO" id="GO:0043023">
    <property type="term" value="F:ribosomal large subunit binding"/>
    <property type="evidence" value="ECO:0007669"/>
    <property type="project" value="UniProtKB-UniRule"/>
</dbReference>
<dbReference type="GO" id="GO:0019843">
    <property type="term" value="F:rRNA binding"/>
    <property type="evidence" value="ECO:0007669"/>
    <property type="project" value="UniProtKB-UniRule"/>
</dbReference>
<dbReference type="GO" id="GO:0006298">
    <property type="term" value="P:mismatch repair"/>
    <property type="evidence" value="ECO:0007669"/>
    <property type="project" value="InterPro"/>
</dbReference>
<dbReference type="GO" id="GO:0045910">
    <property type="term" value="P:negative regulation of DNA recombination"/>
    <property type="evidence" value="ECO:0007669"/>
    <property type="project" value="InterPro"/>
</dbReference>
<dbReference type="GO" id="GO:0072344">
    <property type="term" value="P:rescue of stalled ribosome"/>
    <property type="evidence" value="ECO:0007669"/>
    <property type="project" value="UniProtKB-UniRule"/>
</dbReference>
<dbReference type="CDD" id="cd03280">
    <property type="entry name" value="ABC_MutS2"/>
    <property type="match status" value="1"/>
</dbReference>
<dbReference type="FunFam" id="3.30.1370.110:FF:000006">
    <property type="entry name" value="Endonuclease MutS2"/>
    <property type="match status" value="1"/>
</dbReference>
<dbReference type="FunFam" id="3.40.50.300:FF:000830">
    <property type="entry name" value="Endonuclease MutS2"/>
    <property type="match status" value="1"/>
</dbReference>
<dbReference type="Gene3D" id="3.30.1370.110">
    <property type="match status" value="1"/>
</dbReference>
<dbReference type="Gene3D" id="3.40.50.300">
    <property type="entry name" value="P-loop containing nucleotide triphosphate hydrolases"/>
    <property type="match status" value="1"/>
</dbReference>
<dbReference type="HAMAP" id="MF_00092">
    <property type="entry name" value="MutS2"/>
    <property type="match status" value="1"/>
</dbReference>
<dbReference type="InterPro" id="IPR000432">
    <property type="entry name" value="DNA_mismatch_repair_MutS_C"/>
</dbReference>
<dbReference type="InterPro" id="IPR007696">
    <property type="entry name" value="DNA_mismatch_repair_MutS_core"/>
</dbReference>
<dbReference type="InterPro" id="IPR036187">
    <property type="entry name" value="DNA_mismatch_repair_MutS_sf"/>
</dbReference>
<dbReference type="InterPro" id="IPR046893">
    <property type="entry name" value="MSSS"/>
</dbReference>
<dbReference type="InterPro" id="IPR045076">
    <property type="entry name" value="MutS"/>
</dbReference>
<dbReference type="InterPro" id="IPR005747">
    <property type="entry name" value="MutS2"/>
</dbReference>
<dbReference type="InterPro" id="IPR027417">
    <property type="entry name" value="P-loop_NTPase"/>
</dbReference>
<dbReference type="InterPro" id="IPR002625">
    <property type="entry name" value="Smr_dom"/>
</dbReference>
<dbReference type="InterPro" id="IPR036063">
    <property type="entry name" value="Smr_dom_sf"/>
</dbReference>
<dbReference type="NCBIfam" id="TIGR01069">
    <property type="entry name" value="mutS2"/>
    <property type="match status" value="1"/>
</dbReference>
<dbReference type="PANTHER" id="PTHR48466:SF2">
    <property type="entry name" value="OS10G0509000 PROTEIN"/>
    <property type="match status" value="1"/>
</dbReference>
<dbReference type="PANTHER" id="PTHR48466">
    <property type="entry name" value="OS10G0509000 PROTEIN-RELATED"/>
    <property type="match status" value="1"/>
</dbReference>
<dbReference type="Pfam" id="PF20297">
    <property type="entry name" value="MSSS"/>
    <property type="match status" value="1"/>
</dbReference>
<dbReference type="Pfam" id="PF00488">
    <property type="entry name" value="MutS_V"/>
    <property type="match status" value="1"/>
</dbReference>
<dbReference type="Pfam" id="PF01713">
    <property type="entry name" value="Smr"/>
    <property type="match status" value="1"/>
</dbReference>
<dbReference type="PIRSF" id="PIRSF005814">
    <property type="entry name" value="MutS_YshD"/>
    <property type="match status" value="1"/>
</dbReference>
<dbReference type="SMART" id="SM00534">
    <property type="entry name" value="MUTSac"/>
    <property type="match status" value="1"/>
</dbReference>
<dbReference type="SMART" id="SM00533">
    <property type="entry name" value="MUTSd"/>
    <property type="match status" value="1"/>
</dbReference>
<dbReference type="SMART" id="SM00463">
    <property type="entry name" value="SMR"/>
    <property type="match status" value="1"/>
</dbReference>
<dbReference type="SUPFAM" id="SSF48334">
    <property type="entry name" value="DNA repair protein MutS, domain III"/>
    <property type="match status" value="1"/>
</dbReference>
<dbReference type="SUPFAM" id="SSF52540">
    <property type="entry name" value="P-loop containing nucleoside triphosphate hydrolases"/>
    <property type="match status" value="1"/>
</dbReference>
<dbReference type="SUPFAM" id="SSF160443">
    <property type="entry name" value="SMR domain-like"/>
    <property type="match status" value="1"/>
</dbReference>
<dbReference type="PROSITE" id="PS00486">
    <property type="entry name" value="DNA_MISMATCH_REPAIR_2"/>
    <property type="match status" value="1"/>
</dbReference>
<dbReference type="PROSITE" id="PS50828">
    <property type="entry name" value="SMR"/>
    <property type="match status" value="1"/>
</dbReference>
<sequence>MRQKTLDVLEFEKIKSLVANETISDLGLEKVNQMMPATNFETVVFQMEETDEIAQIYNKHRLPSLSGLSKVSAFIHRADIGGVLNVSELNLIKRLIQVQNQFKTFYNQLVEEDEGVKYPILDDKMNQLPVLTDLFQQINETCDTYDLYDNASYELQGIRSKISSTNQRIRQNLDRIVKSQANQKKLSDAIVTVRNERNVIPVKAEYRQDFNGIVHDQSASGQTLYIEPSSVVEMNNQISRLRHDEAIEKERILTQLTGYVAADKDALLVAEQVMGQLDFLIAKARYSRSIKGTKPIFKEDRTVYLPKAYHPLLNRETVVANTIEFMEDIETVIITGPNTGGKTVTLKTLGLIIVMAQSGLLIPTLDGSQLSVFKNVYCDIGDEQSIEQSLSTFSSHMTNIVEILKHADKHSLVLFDELGAGTDPSEGAALAMSILDHVRKIGSLVMATTHYPELKAYSYNREGVMNASVEFDVDTLSPTYKLLMGVPGRSNAFDISKKLGLSLNIINKAKTMIGTDEKEINEMIESLERNYKRVETQRLELDRLVKEAEQVHDDLSKQYQQFQNYEKSLIEEAKEKANQKIKAATKEADDIIKDLRQLREQKGADVKEHELIDKKKRLDDHYEAKSIKQNVQKQKYDKIVAGDEVKVLSYGQKGEVLEIVNDEEAIVQMGIIKMKLPIEDLEKKQKEKVKPTKMVTRQNRQTIKTELDLRGYRYEDALIELDQYLDQAVLSNYEQVYIIHGKGTGALQKGVQQHLKKHKSVSDFRGGMPSEGGFGVTVATLK</sequence>
<organism>
    <name type="scientific">Staphylococcus aureus (strain Newman)</name>
    <dbReference type="NCBI Taxonomy" id="426430"/>
    <lineage>
        <taxon>Bacteria</taxon>
        <taxon>Bacillati</taxon>
        <taxon>Bacillota</taxon>
        <taxon>Bacilli</taxon>
        <taxon>Bacillales</taxon>
        <taxon>Staphylococcaceae</taxon>
        <taxon>Staphylococcus</taxon>
    </lineage>
</organism>
<feature type="chain" id="PRO_1000093383" description="Endonuclease MutS2">
    <location>
        <begin position="1"/>
        <end position="782"/>
    </location>
</feature>
<feature type="domain" description="Smr" evidence="1">
    <location>
        <begin position="707"/>
        <end position="782"/>
    </location>
</feature>
<feature type="binding site" evidence="1">
    <location>
        <begin position="336"/>
        <end position="343"/>
    </location>
    <ligand>
        <name>ATP</name>
        <dbReference type="ChEBI" id="CHEBI:30616"/>
    </ligand>
</feature>
<reference key="1">
    <citation type="journal article" date="2008" name="J. Bacteriol.">
        <title>Genome sequence of Staphylococcus aureus strain Newman and comparative analysis of staphylococcal genomes: polymorphism and evolution of two major pathogenicity islands.</title>
        <authorList>
            <person name="Baba T."/>
            <person name="Bae T."/>
            <person name="Schneewind O."/>
            <person name="Takeuchi F."/>
            <person name="Hiramatsu K."/>
        </authorList>
    </citation>
    <scope>NUCLEOTIDE SEQUENCE [LARGE SCALE GENOMIC DNA]</scope>
    <source>
        <strain>Newman</strain>
    </source>
</reference>
<gene>
    <name evidence="1" type="primary">mutS2</name>
    <name evidence="1" type="synonym">rqcU</name>
    <name type="ordered locus">NWMN_1056</name>
</gene>